<proteinExistence type="inferred from homology"/>
<organism>
    <name type="scientific">Vanderwaltozyma polyspora (strain ATCC 22028 / DSM 70294 / BCRC 21397 / CBS 2163 / NBRC 10782 / NRRL Y-8283 / UCD 57-17)</name>
    <name type="common">Kluyveromyces polysporus</name>
    <dbReference type="NCBI Taxonomy" id="436907"/>
    <lineage>
        <taxon>Eukaryota</taxon>
        <taxon>Fungi</taxon>
        <taxon>Dikarya</taxon>
        <taxon>Ascomycota</taxon>
        <taxon>Saccharomycotina</taxon>
        <taxon>Saccharomycetes</taxon>
        <taxon>Saccharomycetales</taxon>
        <taxon>Saccharomycetaceae</taxon>
        <taxon>Vanderwaltozyma</taxon>
    </lineage>
</organism>
<protein>
    <recommendedName>
        <fullName>Type 1 phosphatases regulator YPI1</fullName>
    </recommendedName>
</protein>
<name>YPI1_VANPO</name>
<reference key="1">
    <citation type="journal article" date="2007" name="Proc. Natl. Acad. Sci. U.S.A.">
        <title>Independent sorting-out of thousands of duplicated gene pairs in two yeast species descended from a whole-genome duplication.</title>
        <authorList>
            <person name="Scannell D.R."/>
            <person name="Frank A.C."/>
            <person name="Conant G.C."/>
            <person name="Byrne K.P."/>
            <person name="Woolfit M."/>
            <person name="Wolfe K.H."/>
        </authorList>
    </citation>
    <scope>NUCLEOTIDE SEQUENCE [LARGE SCALE GENOMIC DNA]</scope>
    <source>
        <strain>ATCC 22028 / DSM 70294 / BCRC 21397 / CBS 2163 / NBRC 10782 / NRRL Y-8283 / UCD 57-17</strain>
    </source>
</reference>
<evidence type="ECO:0000250" key="1"/>
<evidence type="ECO:0000256" key="2">
    <source>
        <dbReference type="SAM" id="MobiDB-lite"/>
    </source>
</evidence>
<evidence type="ECO:0000305" key="3"/>
<comment type="function">
    <text evidence="1">Regulator of type 1 phosphatases which maintains protein phosphatase activity under strict control.</text>
</comment>
<comment type="subcellular location">
    <subcellularLocation>
        <location evidence="1">Nucleus</location>
    </subcellularLocation>
</comment>
<comment type="similarity">
    <text evidence="3">Belongs to the YPI1 family.</text>
</comment>
<dbReference type="EMBL" id="DS480514">
    <property type="protein sequence ID" value="EDO14755.1"/>
    <property type="molecule type" value="Genomic_DNA"/>
</dbReference>
<dbReference type="RefSeq" id="XP_001642613.1">
    <property type="nucleotide sequence ID" value="XM_001642563.1"/>
</dbReference>
<dbReference type="SMR" id="A7TSJ7"/>
<dbReference type="FunCoup" id="A7TSJ7">
    <property type="interactions" value="179"/>
</dbReference>
<dbReference type="STRING" id="436907.A7TSJ7"/>
<dbReference type="GeneID" id="5542780"/>
<dbReference type="KEGG" id="vpo:Kpol_354p3"/>
<dbReference type="eggNOG" id="KOG4102">
    <property type="taxonomic scope" value="Eukaryota"/>
</dbReference>
<dbReference type="HOGENOM" id="CLU_098333_3_0_1"/>
<dbReference type="InParanoid" id="A7TSJ7"/>
<dbReference type="OMA" id="RRHIQWA"/>
<dbReference type="OrthoDB" id="307488at2759"/>
<dbReference type="PhylomeDB" id="A7TSJ7"/>
<dbReference type="Proteomes" id="UP000000267">
    <property type="component" value="Unassembled WGS sequence"/>
</dbReference>
<dbReference type="GO" id="GO:0005634">
    <property type="term" value="C:nucleus"/>
    <property type="evidence" value="ECO:0007669"/>
    <property type="project" value="UniProtKB-SubCell"/>
</dbReference>
<dbReference type="GO" id="GO:0000164">
    <property type="term" value="C:protein phosphatase type 1 complex"/>
    <property type="evidence" value="ECO:0007669"/>
    <property type="project" value="EnsemblFungi"/>
</dbReference>
<dbReference type="GO" id="GO:0008157">
    <property type="term" value="F:protein phosphatase 1 binding"/>
    <property type="evidence" value="ECO:0007669"/>
    <property type="project" value="TreeGrafter"/>
</dbReference>
<dbReference type="GO" id="GO:0072542">
    <property type="term" value="F:protein phosphatase activator activity"/>
    <property type="evidence" value="ECO:0007669"/>
    <property type="project" value="EnsemblFungi"/>
</dbReference>
<dbReference type="GO" id="GO:0004865">
    <property type="term" value="F:protein serine/threonine phosphatase inhibitor activity"/>
    <property type="evidence" value="ECO:0007669"/>
    <property type="project" value="EnsemblFungi"/>
</dbReference>
<dbReference type="GO" id="GO:0005977">
    <property type="term" value="P:glycogen metabolic process"/>
    <property type="evidence" value="ECO:0007669"/>
    <property type="project" value="EnsemblFungi"/>
</dbReference>
<dbReference type="GO" id="GO:0006873">
    <property type="term" value="P:intracellular monoatomic ion homeostasis"/>
    <property type="evidence" value="ECO:0007669"/>
    <property type="project" value="EnsemblFungi"/>
</dbReference>
<dbReference type="GO" id="GO:0007094">
    <property type="term" value="P:mitotic spindle assembly checkpoint signaling"/>
    <property type="evidence" value="ECO:0007669"/>
    <property type="project" value="EnsemblFungi"/>
</dbReference>
<dbReference type="GO" id="GO:1900180">
    <property type="term" value="P:regulation of protein localization to nucleus"/>
    <property type="evidence" value="ECO:0007669"/>
    <property type="project" value="EnsemblFungi"/>
</dbReference>
<dbReference type="InterPro" id="IPR011107">
    <property type="entry name" value="PPI_Ypi1"/>
</dbReference>
<dbReference type="PANTHER" id="PTHR20835:SF0">
    <property type="entry name" value="E3 UBIQUITIN-PROTEIN LIGASE PPP1R11"/>
    <property type="match status" value="1"/>
</dbReference>
<dbReference type="PANTHER" id="PTHR20835">
    <property type="entry name" value="E3 UBIQUITIN-PROTEIN LIGASE PPP1R11-RELATED"/>
    <property type="match status" value="1"/>
</dbReference>
<dbReference type="Pfam" id="PF07491">
    <property type="entry name" value="PPI_Ypi1"/>
    <property type="match status" value="1"/>
</dbReference>
<sequence>MQNQQEEISSTQTTTIEVLPPVLQLRASRDQPSRHDVRWGTDVIDNENMNKKKTKICCIYHPQDEDEEGCTSDHQHEEPPESSSSSSSESENDKDLGFDERRKRRVERRRRKLRDNTDSAPNAYEVQPDYSEHRKKMMEKKSNNT</sequence>
<accession>A7TSJ7</accession>
<keyword id="KW-0539">Nucleus</keyword>
<keyword id="KW-1185">Reference proteome</keyword>
<gene>
    <name type="primary">YPI1</name>
    <name type="ORF">Kpol_354p3</name>
</gene>
<feature type="chain" id="PRO_0000333486" description="Type 1 phosphatases regulator YPI1">
    <location>
        <begin position="1"/>
        <end position="145"/>
    </location>
</feature>
<feature type="region of interest" description="Disordered" evidence="2">
    <location>
        <begin position="1"/>
        <end position="41"/>
    </location>
</feature>
<feature type="region of interest" description="Disordered" evidence="2">
    <location>
        <begin position="64"/>
        <end position="145"/>
    </location>
</feature>
<feature type="compositionally biased region" description="Low complexity" evidence="2">
    <location>
        <begin position="1"/>
        <end position="17"/>
    </location>
</feature>
<feature type="compositionally biased region" description="Basic and acidic residues" evidence="2">
    <location>
        <begin position="27"/>
        <end position="39"/>
    </location>
</feature>
<feature type="compositionally biased region" description="Basic and acidic residues" evidence="2">
    <location>
        <begin position="91"/>
        <end position="101"/>
    </location>
</feature>
<feature type="compositionally biased region" description="Basic residues" evidence="2">
    <location>
        <begin position="102"/>
        <end position="113"/>
    </location>
</feature>